<organism>
    <name type="scientific">Helicobacter acinonychis (strain Sheeba)</name>
    <dbReference type="NCBI Taxonomy" id="382638"/>
    <lineage>
        <taxon>Bacteria</taxon>
        <taxon>Pseudomonadati</taxon>
        <taxon>Campylobacterota</taxon>
        <taxon>Epsilonproteobacteria</taxon>
        <taxon>Campylobacterales</taxon>
        <taxon>Helicobacteraceae</taxon>
        <taxon>Helicobacter</taxon>
    </lineage>
</organism>
<protein>
    <recommendedName>
        <fullName evidence="1">Large ribosomal subunit protein bL12</fullName>
    </recommendedName>
    <alternativeName>
        <fullName evidence="2">50S ribosomal protein L7/L12</fullName>
    </alternativeName>
</protein>
<comment type="function">
    <text evidence="1">Forms part of the ribosomal stalk which helps the ribosome interact with GTP-bound translation factors. Is thus essential for accurate translation.</text>
</comment>
<comment type="subunit">
    <text evidence="1">Homodimer. Part of the ribosomal stalk of the 50S ribosomal subunit. Forms a multimeric L10(L12)X complex, where L10 forms an elongated spine to which 2 to 4 L12 dimers bind in a sequential fashion. Binds GTP-bound translation factors.</text>
</comment>
<comment type="similarity">
    <text evidence="1">Belongs to the bacterial ribosomal protein bL12 family.</text>
</comment>
<accession>Q17VN5</accession>
<feature type="chain" id="PRO_1000007019" description="Large ribosomal subunit protein bL12">
    <location>
        <begin position="1"/>
        <end position="125"/>
    </location>
</feature>
<sequence>MAISKEEVLEYIGSLSVLELSELVKMFEEKFGVSATPTVVAGAAVAGGAVAESEEKTDFNVILADSGAEKIKVIKVVREITGLGLKEAKDATEKTPHVLKEGVNKEEAETIKKKLEEVGAKVEIK</sequence>
<reference key="1">
    <citation type="journal article" date="2006" name="PLoS Genet.">
        <title>Who ate whom? Adaptive Helicobacter genomic changes that accompanied a host jump from early humans to large felines.</title>
        <authorList>
            <person name="Eppinger M."/>
            <person name="Baar C."/>
            <person name="Linz B."/>
            <person name="Raddatz G."/>
            <person name="Lanz C."/>
            <person name="Keller H."/>
            <person name="Morelli G."/>
            <person name="Gressmann H."/>
            <person name="Achtman M."/>
            <person name="Schuster S.C."/>
        </authorList>
    </citation>
    <scope>NUCLEOTIDE SEQUENCE [LARGE SCALE GENOMIC DNA]</scope>
    <source>
        <strain>Sheeba</strain>
    </source>
</reference>
<evidence type="ECO:0000255" key="1">
    <source>
        <dbReference type="HAMAP-Rule" id="MF_00368"/>
    </source>
</evidence>
<evidence type="ECO:0000305" key="2"/>
<keyword id="KW-0687">Ribonucleoprotein</keyword>
<keyword id="KW-0689">Ribosomal protein</keyword>
<dbReference type="EMBL" id="AM260522">
    <property type="protein sequence ID" value="CAK00291.1"/>
    <property type="molecule type" value="Genomic_DNA"/>
</dbReference>
<dbReference type="RefSeq" id="WP_011578374.1">
    <property type="nucleotide sequence ID" value="NC_008229.1"/>
</dbReference>
<dbReference type="SMR" id="Q17VN5"/>
<dbReference type="STRING" id="382638.Hac_1579"/>
<dbReference type="GeneID" id="31758831"/>
<dbReference type="KEGG" id="hac:Hac_1579"/>
<dbReference type="eggNOG" id="COG0222">
    <property type="taxonomic scope" value="Bacteria"/>
</dbReference>
<dbReference type="HOGENOM" id="CLU_086499_3_2_7"/>
<dbReference type="OrthoDB" id="9811748at2"/>
<dbReference type="BioCyc" id="HACI382638:HAC_RS06650-MONOMER"/>
<dbReference type="Proteomes" id="UP000000775">
    <property type="component" value="Chromosome"/>
</dbReference>
<dbReference type="GO" id="GO:0022625">
    <property type="term" value="C:cytosolic large ribosomal subunit"/>
    <property type="evidence" value="ECO:0007669"/>
    <property type="project" value="TreeGrafter"/>
</dbReference>
<dbReference type="GO" id="GO:0003729">
    <property type="term" value="F:mRNA binding"/>
    <property type="evidence" value="ECO:0007669"/>
    <property type="project" value="TreeGrafter"/>
</dbReference>
<dbReference type="GO" id="GO:0003735">
    <property type="term" value="F:structural constituent of ribosome"/>
    <property type="evidence" value="ECO:0007669"/>
    <property type="project" value="InterPro"/>
</dbReference>
<dbReference type="GO" id="GO:0006412">
    <property type="term" value="P:translation"/>
    <property type="evidence" value="ECO:0007669"/>
    <property type="project" value="UniProtKB-UniRule"/>
</dbReference>
<dbReference type="CDD" id="cd00387">
    <property type="entry name" value="Ribosomal_L7_L12"/>
    <property type="match status" value="1"/>
</dbReference>
<dbReference type="FunFam" id="1.20.5.710:FF:000004">
    <property type="entry name" value="50S ribosomal protein L7/L12"/>
    <property type="match status" value="1"/>
</dbReference>
<dbReference type="FunFam" id="3.30.1390.10:FF:000001">
    <property type="entry name" value="50S ribosomal protein L7/L12"/>
    <property type="match status" value="1"/>
</dbReference>
<dbReference type="Gene3D" id="3.30.1390.10">
    <property type="match status" value="1"/>
</dbReference>
<dbReference type="Gene3D" id="1.20.5.710">
    <property type="entry name" value="Single helix bin"/>
    <property type="match status" value="1"/>
</dbReference>
<dbReference type="HAMAP" id="MF_00368">
    <property type="entry name" value="Ribosomal_bL12"/>
    <property type="match status" value="1"/>
</dbReference>
<dbReference type="InterPro" id="IPR000206">
    <property type="entry name" value="Ribosomal_bL12"/>
</dbReference>
<dbReference type="InterPro" id="IPR013823">
    <property type="entry name" value="Ribosomal_bL12_C"/>
</dbReference>
<dbReference type="InterPro" id="IPR014719">
    <property type="entry name" value="Ribosomal_bL12_C/ClpS-like"/>
</dbReference>
<dbReference type="InterPro" id="IPR008932">
    <property type="entry name" value="Ribosomal_bL12_oligo"/>
</dbReference>
<dbReference type="InterPro" id="IPR036235">
    <property type="entry name" value="Ribosomal_bL12_oligo_N_sf"/>
</dbReference>
<dbReference type="NCBIfam" id="TIGR00855">
    <property type="entry name" value="L12"/>
    <property type="match status" value="1"/>
</dbReference>
<dbReference type="PANTHER" id="PTHR45987">
    <property type="entry name" value="39S RIBOSOMAL PROTEIN L12"/>
    <property type="match status" value="1"/>
</dbReference>
<dbReference type="PANTHER" id="PTHR45987:SF4">
    <property type="entry name" value="LARGE RIBOSOMAL SUBUNIT PROTEIN BL12M"/>
    <property type="match status" value="1"/>
</dbReference>
<dbReference type="Pfam" id="PF00542">
    <property type="entry name" value="Ribosomal_L12"/>
    <property type="match status" value="1"/>
</dbReference>
<dbReference type="Pfam" id="PF16320">
    <property type="entry name" value="Ribosomal_L12_N"/>
    <property type="match status" value="1"/>
</dbReference>
<dbReference type="SUPFAM" id="SSF54736">
    <property type="entry name" value="ClpS-like"/>
    <property type="match status" value="1"/>
</dbReference>
<dbReference type="SUPFAM" id="SSF48300">
    <property type="entry name" value="Ribosomal protein L7/12, oligomerisation (N-terminal) domain"/>
    <property type="match status" value="1"/>
</dbReference>
<name>RL7_HELAH</name>
<gene>
    <name evidence="1" type="primary">rplL</name>
    <name type="ordered locus">Hac_1579</name>
</gene>
<proteinExistence type="inferred from homology"/>